<organism>
    <name type="scientific">Equus caballus</name>
    <name type="common">Horse</name>
    <dbReference type="NCBI Taxonomy" id="9796"/>
    <lineage>
        <taxon>Eukaryota</taxon>
        <taxon>Metazoa</taxon>
        <taxon>Chordata</taxon>
        <taxon>Craniata</taxon>
        <taxon>Vertebrata</taxon>
        <taxon>Euteleostomi</taxon>
        <taxon>Mammalia</taxon>
        <taxon>Eutheria</taxon>
        <taxon>Laurasiatheria</taxon>
        <taxon>Perissodactyla</taxon>
        <taxon>Equidae</taxon>
        <taxon>Equus</taxon>
    </lineage>
</organism>
<gene>
    <name type="primary">GBE1</name>
</gene>
<accession>Q6EAS5</accession>
<sequence length="699" mass="79978">MAAPAARADGSDAALAAALADVPDLGRLLEVDPYLKPYAPDFQRRYNRFSQTLDNIGKNEGGIDKFSRGYESFGVHRCADGGLYCKEWAPGAEGVFLTGDFNDWNPFSYPYKKLDYGKWDLYIPPKPNKSLLVPHGSKLKVVIRSKSGEILYRISPWAKYVVRESGNVNYDWIHWDPEQPYKFKHSRPKKPRSLRIYESHVGISSHEGKIASYKHFTCNVLPRIKGLGYNCIQMMAIMEHAYYASFGYQITSFFAASSRYGTPEELKELVDTAHSMGITVLLDVVHSHASKNSEDGLNMFDGTDSCYFHSGPRGTHDLWDSRLFIYSSWEVLRFLLSNIRWWLEEYGFDGFRFDGVTSMLYHHHGIGASFSGDYHEYFGLQVDEDALTYLMLANHLVHTLYPDSITIAEDVSGMPALCSPISQGGGGFDYRLAMAIPDKWIQLVKEFKDEDWNMGNIVYTLTNRRHLEKCIAYAESHDQALVGDKSLAFWLMDAEMYTNMSVLTPFTPVIDRGIQLHKMIRLITHALGGEGYLNFMGNEFGHPEWLDFPRKGNNESYHYARRQFHLTDDDLLRYKFLNNFDRDMNKLEERCGWLSAPQAFVSEKHEGNKVIAFERAALLFIFNFHPSKSYTNYRVGTTLPGKFKIVLDSDAAEYGGHQRLDHNTDFFSEPYEHNERPSSLLVYIPSRVALILQNVDPPN</sequence>
<protein>
    <recommendedName>
        <fullName>1,4-alpha-glucan-branching enzyme</fullName>
        <ecNumber evidence="6">2.4.1.18</ecNumber>
    </recommendedName>
    <alternativeName>
        <fullName>Brancher enzyme</fullName>
    </alternativeName>
    <alternativeName>
        <fullName evidence="4">Glycogen-branching enzyme</fullName>
    </alternativeName>
</protein>
<evidence type="ECO:0000250" key="1">
    <source>
        <dbReference type="UniProtKB" id="Q04446"/>
    </source>
</evidence>
<evidence type="ECO:0000250" key="2">
    <source>
        <dbReference type="UniProtKB" id="Q6FJV0"/>
    </source>
</evidence>
<evidence type="ECO:0000269" key="3">
    <source>
    </source>
</evidence>
<evidence type="ECO:0000303" key="4">
    <source>
    </source>
</evidence>
<evidence type="ECO:0000305" key="5"/>
<evidence type="ECO:0000305" key="6">
    <source>
    </source>
</evidence>
<proteinExistence type="evidence at protein level"/>
<reference key="1">
    <citation type="journal article" date="2004" name="Mamm. Genome">
        <title>Glycogen branching enzyme (GBE1) mutation causing equine glycogen storage disease IV.</title>
        <authorList>
            <person name="Ward T.L."/>
            <person name="Valberg S.J."/>
            <person name="Adelson D.L."/>
            <person name="Abbey C.A."/>
            <person name="Binns M.M."/>
            <person name="Mickelson J.R."/>
        </authorList>
    </citation>
    <scope>NUCLEOTIDE SEQUENCE [MRNA]</scope>
    <scope>DISEASE</scope>
    <scope>FUNCTION</scope>
    <scope>PATHWAY</scope>
    <scope>CATALYTIC ACTIVITY</scope>
</reference>
<comment type="function">
    <text evidence="1">Glycogen-branching enzyme participates in the glycogen biosynthetic process along with glycogenin and glycogen synthase. Generates alpha-1,6-glucosidic branches from alpha-1,4-linked glucose chains, to increase solubility of the glycogen polymer.</text>
</comment>
<comment type="catalytic activity">
    <reaction evidence="6">
        <text>Transfers a segment of a (1-&gt;4)-alpha-D-glucan chain to a primary hydroxy group in a similar glucan chain.</text>
        <dbReference type="EC" id="2.4.1.18"/>
    </reaction>
</comment>
<comment type="pathway">
    <text evidence="3">Glycan biosynthesis; glycogen biosynthesis.</text>
</comment>
<comment type="subunit">
    <text evidence="1">Monomer.</text>
</comment>
<comment type="domain">
    <text evidence="1">Binds its carbohydrate substrate close to the active site, but also via regions close to the N-terminus; this may result in increased affinity and therefore increased catalytic efficiency.</text>
</comment>
<comment type="disease">
    <text evidence="3">Defects in GBE1 are the cause of glycogen storage disease IV (GSD-IV). GSD-IV is recessive fatal fetal and neonatal disease in American Quarter horses.</text>
</comment>
<comment type="similarity">
    <text evidence="5">Belongs to the glycosyl hydrolase 13 family. GlgB subfamily.</text>
</comment>
<name>GLGB_HORSE</name>
<keyword id="KW-0320">Glycogen biosynthesis</keyword>
<keyword id="KW-0322">Glycogen storage disease</keyword>
<keyword id="KW-0328">Glycosyltransferase</keyword>
<keyword id="KW-0597">Phosphoprotein</keyword>
<keyword id="KW-1185">Reference proteome</keyword>
<keyword id="KW-0808">Transferase</keyword>
<feature type="chain" id="PRO_0000188774" description="1,4-alpha-glucan-branching enzyme">
    <location>
        <begin position="1"/>
        <end position="699"/>
    </location>
</feature>
<feature type="active site" description="Nucleophile" evidence="1">
    <location>
        <position position="354"/>
    </location>
</feature>
<feature type="active site" description="Proton donor" evidence="1">
    <location>
        <position position="409"/>
    </location>
</feature>
<feature type="binding site" evidence="1">
    <location>
        <begin position="59"/>
        <end position="60"/>
    </location>
    <ligand>
        <name>substrate</name>
    </ligand>
</feature>
<feature type="binding site" evidence="1">
    <location>
        <begin position="88"/>
        <end position="90"/>
    </location>
    <ligand>
        <name>substrate</name>
    </ligand>
</feature>
<feature type="binding site" evidence="2">
    <location>
        <position position="104"/>
    </location>
    <ligand>
        <name>(1,4-alpha-D-glucosyl)n</name>
        <dbReference type="ChEBI" id="CHEBI:15444"/>
    </ligand>
</feature>
<feature type="binding site" evidence="1">
    <location>
        <begin position="115"/>
        <end position="118"/>
    </location>
    <ligand>
        <name>substrate</name>
    </ligand>
</feature>
<feature type="binding site" evidence="2">
    <location>
        <position position="140"/>
    </location>
    <ligand>
        <name>(1,4-alpha-D-glucosyl)n</name>
        <dbReference type="ChEBI" id="CHEBI:15444"/>
    </ligand>
</feature>
<feature type="binding site" evidence="1">
    <location>
        <begin position="330"/>
        <end position="333"/>
    </location>
    <ligand>
        <name>substrate</name>
    </ligand>
</feature>
<feature type="site" description="Transition state stabilizer" evidence="1">
    <location>
        <position position="478"/>
    </location>
</feature>
<feature type="modified residue" description="Phosphotyrosine" evidence="1">
    <location>
        <position position="170"/>
    </location>
</feature>
<dbReference type="EC" id="2.4.1.18" evidence="6"/>
<dbReference type="EMBL" id="AY505107">
    <property type="protein sequence ID" value="AAS91786.1"/>
    <property type="molecule type" value="mRNA"/>
</dbReference>
<dbReference type="RefSeq" id="NP_001075409.1">
    <property type="nucleotide sequence ID" value="NM_001081940.3"/>
</dbReference>
<dbReference type="SMR" id="Q6EAS5"/>
<dbReference type="FunCoup" id="Q6EAS5">
    <property type="interactions" value="837"/>
</dbReference>
<dbReference type="STRING" id="9796.ENSECAP00000012240"/>
<dbReference type="CAZy" id="CBM48">
    <property type="family name" value="Carbohydrate-Binding Module Family 48"/>
</dbReference>
<dbReference type="CAZy" id="GH13">
    <property type="family name" value="Glycoside Hydrolase Family 13"/>
</dbReference>
<dbReference type="PaxDb" id="9796-ENSECAP00000012240"/>
<dbReference type="PeptideAtlas" id="Q6EAS5"/>
<dbReference type="GeneID" id="100034152"/>
<dbReference type="KEGG" id="ecb:100034152"/>
<dbReference type="CTD" id="2632"/>
<dbReference type="InParanoid" id="Q6EAS5"/>
<dbReference type="OMA" id="YEMHLGS"/>
<dbReference type="OrthoDB" id="196493at2759"/>
<dbReference type="BRENDA" id="2.4.1.18">
    <property type="organism ID" value="2120"/>
</dbReference>
<dbReference type="UniPathway" id="UPA00164"/>
<dbReference type="Proteomes" id="UP000002281">
    <property type="component" value="Chromosome 26"/>
</dbReference>
<dbReference type="Bgee" id="ENSECAG00000014096">
    <property type="expression patterns" value="Expressed in articular cartilage of joint and 23 other cell types or tissues"/>
</dbReference>
<dbReference type="ExpressionAtlas" id="Q6EAS5">
    <property type="expression patterns" value="baseline"/>
</dbReference>
<dbReference type="GO" id="GO:0005737">
    <property type="term" value="C:cytoplasm"/>
    <property type="evidence" value="ECO:0000250"/>
    <property type="project" value="UniProtKB"/>
</dbReference>
<dbReference type="GO" id="GO:0003844">
    <property type="term" value="F:1,4-alpha-glucan branching enzyme activity"/>
    <property type="evidence" value="ECO:0000250"/>
    <property type="project" value="UniProtKB"/>
</dbReference>
<dbReference type="GO" id="GO:0043169">
    <property type="term" value="F:cation binding"/>
    <property type="evidence" value="ECO:0007669"/>
    <property type="project" value="InterPro"/>
</dbReference>
<dbReference type="GO" id="GO:0004553">
    <property type="term" value="F:hydrolase activity, hydrolyzing O-glycosyl compounds"/>
    <property type="evidence" value="ECO:0007669"/>
    <property type="project" value="InterPro"/>
</dbReference>
<dbReference type="GO" id="GO:0005978">
    <property type="term" value="P:glycogen biosynthetic process"/>
    <property type="evidence" value="ECO:0000250"/>
    <property type="project" value="UniProtKB"/>
</dbReference>
<dbReference type="CDD" id="cd11321">
    <property type="entry name" value="AmyAc_bac_euk_BE"/>
    <property type="match status" value="1"/>
</dbReference>
<dbReference type="CDD" id="cd02854">
    <property type="entry name" value="E_set_GBE_euk_N"/>
    <property type="match status" value="1"/>
</dbReference>
<dbReference type="FunFam" id="3.20.20.80:FF:000001">
    <property type="entry name" value="1,4-alpha-glucan branching enzyme"/>
    <property type="match status" value="1"/>
</dbReference>
<dbReference type="FunFam" id="2.60.40.1180:FF:000014">
    <property type="entry name" value="1,4-alpha-glucan-branching enzyme"/>
    <property type="match status" value="1"/>
</dbReference>
<dbReference type="FunFam" id="2.60.40.10:FF:000550">
    <property type="entry name" value="1,4-alpha-glucan-branching enzyme isoform B"/>
    <property type="match status" value="1"/>
</dbReference>
<dbReference type="Gene3D" id="3.20.20.80">
    <property type="entry name" value="Glycosidases"/>
    <property type="match status" value="1"/>
</dbReference>
<dbReference type="Gene3D" id="2.60.40.1180">
    <property type="entry name" value="Golgi alpha-mannosidase II"/>
    <property type="match status" value="1"/>
</dbReference>
<dbReference type="Gene3D" id="2.60.40.10">
    <property type="entry name" value="Immunoglobulins"/>
    <property type="match status" value="1"/>
</dbReference>
<dbReference type="InterPro" id="IPR006048">
    <property type="entry name" value="A-amylase/branching_C"/>
</dbReference>
<dbReference type="InterPro" id="IPR037439">
    <property type="entry name" value="Branching_enzy"/>
</dbReference>
<dbReference type="InterPro" id="IPR006047">
    <property type="entry name" value="Glyco_hydro_13_cat_dom"/>
</dbReference>
<dbReference type="InterPro" id="IPR004193">
    <property type="entry name" value="Glyco_hydro_13_N"/>
</dbReference>
<dbReference type="InterPro" id="IPR013780">
    <property type="entry name" value="Glyco_hydro_b"/>
</dbReference>
<dbReference type="InterPro" id="IPR017853">
    <property type="entry name" value="Glycoside_hydrolase_SF"/>
</dbReference>
<dbReference type="InterPro" id="IPR013783">
    <property type="entry name" value="Ig-like_fold"/>
</dbReference>
<dbReference type="InterPro" id="IPR014756">
    <property type="entry name" value="Ig_E-set"/>
</dbReference>
<dbReference type="PANTHER" id="PTHR43651">
    <property type="entry name" value="1,4-ALPHA-GLUCAN-BRANCHING ENZYME"/>
    <property type="match status" value="1"/>
</dbReference>
<dbReference type="PANTHER" id="PTHR43651:SF3">
    <property type="entry name" value="1,4-ALPHA-GLUCAN-BRANCHING ENZYME"/>
    <property type="match status" value="1"/>
</dbReference>
<dbReference type="Pfam" id="PF00128">
    <property type="entry name" value="Alpha-amylase"/>
    <property type="match status" value="1"/>
</dbReference>
<dbReference type="Pfam" id="PF02806">
    <property type="entry name" value="Alpha-amylase_C"/>
    <property type="match status" value="1"/>
</dbReference>
<dbReference type="Pfam" id="PF02922">
    <property type="entry name" value="CBM_48"/>
    <property type="match status" value="1"/>
</dbReference>
<dbReference type="PIRSF" id="PIRSF000463">
    <property type="entry name" value="GlgB"/>
    <property type="match status" value="1"/>
</dbReference>
<dbReference type="SMART" id="SM00642">
    <property type="entry name" value="Aamy"/>
    <property type="match status" value="1"/>
</dbReference>
<dbReference type="SUPFAM" id="SSF51445">
    <property type="entry name" value="(Trans)glycosidases"/>
    <property type="match status" value="1"/>
</dbReference>
<dbReference type="SUPFAM" id="SSF81296">
    <property type="entry name" value="E set domains"/>
    <property type="match status" value="1"/>
</dbReference>
<dbReference type="SUPFAM" id="SSF51011">
    <property type="entry name" value="Glycosyl hydrolase domain"/>
    <property type="match status" value="1"/>
</dbReference>